<accession>P26859</accession>
<gene>
    <name type="primary">RPL2</name>
</gene>
<comment type="subcellular location">
    <subcellularLocation>
        <location>Mitochondrion</location>
    </subcellularLocation>
</comment>
<comment type="similarity">
    <text evidence="2">Belongs to the universal ribosomal protein uL2 family.</text>
</comment>
<protein>
    <recommendedName>
        <fullName evidence="2">Large ribosomal subunit protein uL2m</fullName>
    </recommendedName>
    <alternativeName>
        <fullName>60S ribosomal protein L2, mitochondrial</fullName>
    </alternativeName>
</protein>
<proteinExistence type="inferred from homology"/>
<dbReference type="EMBL" id="M68929">
    <property type="protein sequence ID" value="AAC09415.1"/>
    <property type="molecule type" value="Genomic_DNA"/>
</dbReference>
<dbReference type="PIR" id="S25946">
    <property type="entry name" value="S25946"/>
</dbReference>
<dbReference type="RefSeq" id="NP_054418.1">
    <property type="nucleotide sequence ID" value="NC_001660.1"/>
</dbReference>
<dbReference type="GeneID" id="2702467"/>
<dbReference type="GO" id="GO:0015934">
    <property type="term" value="C:large ribosomal subunit"/>
    <property type="evidence" value="ECO:0007669"/>
    <property type="project" value="InterPro"/>
</dbReference>
<dbReference type="GO" id="GO:0005739">
    <property type="term" value="C:mitochondrion"/>
    <property type="evidence" value="ECO:0007669"/>
    <property type="project" value="UniProtKB-SubCell"/>
</dbReference>
<dbReference type="GO" id="GO:0003723">
    <property type="term" value="F:RNA binding"/>
    <property type="evidence" value="ECO:0007669"/>
    <property type="project" value="InterPro"/>
</dbReference>
<dbReference type="GO" id="GO:0003735">
    <property type="term" value="F:structural constituent of ribosome"/>
    <property type="evidence" value="ECO:0007669"/>
    <property type="project" value="InterPro"/>
</dbReference>
<dbReference type="GO" id="GO:0016740">
    <property type="term" value="F:transferase activity"/>
    <property type="evidence" value="ECO:0007669"/>
    <property type="project" value="InterPro"/>
</dbReference>
<dbReference type="GO" id="GO:0006412">
    <property type="term" value="P:translation"/>
    <property type="evidence" value="ECO:0007669"/>
    <property type="project" value="InterPro"/>
</dbReference>
<dbReference type="FunFam" id="2.30.30.30:FF:000001">
    <property type="entry name" value="50S ribosomal protein L2"/>
    <property type="match status" value="1"/>
</dbReference>
<dbReference type="FunFam" id="4.10.950.10:FF:000001">
    <property type="entry name" value="50S ribosomal protein L2"/>
    <property type="match status" value="1"/>
</dbReference>
<dbReference type="FunFam" id="2.40.50.140:FF:000254">
    <property type="entry name" value="Ribosomal protein L2 mitochondrion"/>
    <property type="match status" value="1"/>
</dbReference>
<dbReference type="Gene3D" id="2.30.30.30">
    <property type="match status" value="1"/>
</dbReference>
<dbReference type="Gene3D" id="2.40.50.140">
    <property type="entry name" value="Nucleic acid-binding proteins"/>
    <property type="match status" value="1"/>
</dbReference>
<dbReference type="Gene3D" id="4.10.950.10">
    <property type="entry name" value="Ribosomal protein L2, domain 3"/>
    <property type="match status" value="1"/>
</dbReference>
<dbReference type="InterPro" id="IPR012340">
    <property type="entry name" value="NA-bd_OB-fold"/>
</dbReference>
<dbReference type="InterPro" id="IPR014722">
    <property type="entry name" value="Rib_uL2_dom2"/>
</dbReference>
<dbReference type="InterPro" id="IPR002171">
    <property type="entry name" value="Ribosomal_uL2"/>
</dbReference>
<dbReference type="InterPro" id="IPR005880">
    <property type="entry name" value="Ribosomal_uL2_bac/org-type"/>
</dbReference>
<dbReference type="InterPro" id="IPR022669">
    <property type="entry name" value="Ribosomal_uL2_C"/>
</dbReference>
<dbReference type="InterPro" id="IPR022671">
    <property type="entry name" value="Ribosomal_uL2_CS"/>
</dbReference>
<dbReference type="InterPro" id="IPR014726">
    <property type="entry name" value="Ribosomal_uL2_dom3"/>
</dbReference>
<dbReference type="InterPro" id="IPR022666">
    <property type="entry name" value="Ribosomal_uL2_RNA-bd_dom"/>
</dbReference>
<dbReference type="InterPro" id="IPR008991">
    <property type="entry name" value="Translation_prot_SH3-like_sf"/>
</dbReference>
<dbReference type="NCBIfam" id="TIGR01171">
    <property type="entry name" value="rplB_bact"/>
    <property type="match status" value="1"/>
</dbReference>
<dbReference type="PANTHER" id="PTHR13691:SF72">
    <property type="entry name" value="EXPRESSED PROTEIN"/>
    <property type="match status" value="1"/>
</dbReference>
<dbReference type="PANTHER" id="PTHR13691">
    <property type="entry name" value="RIBOSOMAL PROTEIN L2"/>
    <property type="match status" value="1"/>
</dbReference>
<dbReference type="Pfam" id="PF00181">
    <property type="entry name" value="Ribosomal_L2"/>
    <property type="match status" value="1"/>
</dbReference>
<dbReference type="Pfam" id="PF03947">
    <property type="entry name" value="Ribosomal_L2_C"/>
    <property type="match status" value="1"/>
</dbReference>
<dbReference type="SMART" id="SM01383">
    <property type="entry name" value="Ribosomal_L2"/>
    <property type="match status" value="1"/>
</dbReference>
<dbReference type="SMART" id="SM01382">
    <property type="entry name" value="Ribosomal_L2_C"/>
    <property type="match status" value="1"/>
</dbReference>
<dbReference type="SUPFAM" id="SSF50249">
    <property type="entry name" value="Nucleic acid-binding proteins"/>
    <property type="match status" value="1"/>
</dbReference>
<dbReference type="SUPFAM" id="SSF50104">
    <property type="entry name" value="Translation proteins SH3-like domain"/>
    <property type="match status" value="1"/>
</dbReference>
<dbReference type="PROSITE" id="PS00467">
    <property type="entry name" value="RIBOSOMAL_L2"/>
    <property type="match status" value="1"/>
</dbReference>
<reference key="1">
    <citation type="journal article" date="1992" name="J. Mol. Biol.">
        <title>Gene organization deduced from the complete sequence of liverwort Marchantia polymorpha mitochondrial DNA. A primitive form of plant mitochondrial genome.</title>
        <authorList>
            <person name="Oda K."/>
            <person name="Yamato K."/>
            <person name="Ohta E."/>
            <person name="Nakamura Y."/>
            <person name="Takemura M."/>
            <person name="Nozato N."/>
            <person name="Akashi K."/>
            <person name="Kanegae T."/>
            <person name="Ogura Y."/>
            <person name="Kohchi T."/>
            <person name="Ohyama K."/>
        </authorList>
    </citation>
    <scope>NUCLEOTIDE SEQUENCE [GENOMIC DNA]</scope>
</reference>
<reference key="2">
    <citation type="journal article" date="1992" name="Nucleic Acids Res.">
        <title>Gene clusters for ribosomal proteins in the mitochondrial genome of a liverwort, Marchantia polymorpha.</title>
        <authorList>
            <person name="Takemura M."/>
            <person name="Oda K."/>
            <person name="Yamato K."/>
            <person name="Ohta E."/>
            <person name="Nakamura Y."/>
            <person name="Nozato N."/>
            <person name="Akashi K."/>
            <person name="Ohyama K."/>
        </authorList>
    </citation>
    <scope>NUCLEOTIDE SEQUENCE [GENOMIC DNA]</scope>
</reference>
<keyword id="KW-0496">Mitochondrion</keyword>
<keyword id="KW-0687">Ribonucleoprotein</keyword>
<keyword id="KW-0689">Ribosomal protein</keyword>
<sequence length="501" mass="55739">MRNSCWKGKALKQLTFHLKRNSAGRNSSGRITVFHRGGGSKRLQRKIDFKRSTSSMGIVERIEYDPNRSSWIALVRWIEGVLRPGKRLAFSKANSRREKNMFFFGLLFSFSSLPRQAQRIKYEKTRALRPCEQILESSWVLGTRDLRAKEVSLGPLGSFLGLPSIAVAGAKPAFFAFRMKGPSSLTGRERLSPLRGENTFSQSEGQRWKTQSGAPRRKSLVLSWSQGPKARNGLMISAHDIGKKDRRPEMAGPHTIPEHAPRALHAVGPSGSGRVLRTSEPFTYILASENLEVGNTVMNFHGSKPSTLLNYHQPSQKANDPSGLRVEETAWDSQAWLHPRGDYASSENKYILDSYYQMVGNCIPLAKIPIGTWVHNIERNPGQGAKLTRAAGTFAQIIQKVENTPQCIVRLPSGVDKLIDSRCRATIGIVSNLNHGKRKFNKAGQSRWLGRRPIVRGVAMNPVDHPHGGGEGRTKGGRPSVSPWGKPTKGGFKTVVRKRRN</sequence>
<geneLocation type="mitochondrion"/>
<feature type="chain" id="PRO_0000129737" description="Large ribosomal subunit protein uL2m">
    <location>
        <begin position="1"/>
        <end position="501"/>
    </location>
</feature>
<feature type="region of interest" description="Disordered" evidence="1">
    <location>
        <begin position="187"/>
        <end position="217"/>
    </location>
</feature>
<feature type="region of interest" description="Disordered" evidence="1">
    <location>
        <begin position="459"/>
        <end position="501"/>
    </location>
</feature>
<feature type="compositionally biased region" description="Polar residues" evidence="1">
    <location>
        <begin position="198"/>
        <end position="213"/>
    </location>
</feature>
<feature type="compositionally biased region" description="Basic and acidic residues" evidence="1">
    <location>
        <begin position="464"/>
        <end position="474"/>
    </location>
</feature>
<organism>
    <name type="scientific">Marchantia polymorpha</name>
    <name type="common">Common liverwort</name>
    <name type="synonym">Marchantia aquatica</name>
    <dbReference type="NCBI Taxonomy" id="3197"/>
    <lineage>
        <taxon>Eukaryota</taxon>
        <taxon>Viridiplantae</taxon>
        <taxon>Streptophyta</taxon>
        <taxon>Embryophyta</taxon>
        <taxon>Marchantiophyta</taxon>
        <taxon>Marchantiopsida</taxon>
        <taxon>Marchantiidae</taxon>
        <taxon>Marchantiales</taxon>
        <taxon>Marchantiaceae</taxon>
        <taxon>Marchantia</taxon>
    </lineage>
</organism>
<evidence type="ECO:0000256" key="1">
    <source>
        <dbReference type="SAM" id="MobiDB-lite"/>
    </source>
</evidence>
<evidence type="ECO:0000305" key="2"/>
<name>RM02_MARPO</name>